<organism>
    <name type="scientific">Brucella suis (strain ATCC 23445 / NCTC 10510)</name>
    <dbReference type="NCBI Taxonomy" id="470137"/>
    <lineage>
        <taxon>Bacteria</taxon>
        <taxon>Pseudomonadati</taxon>
        <taxon>Pseudomonadota</taxon>
        <taxon>Alphaproteobacteria</taxon>
        <taxon>Hyphomicrobiales</taxon>
        <taxon>Brucellaceae</taxon>
        <taxon>Brucella/Ochrobactrum group</taxon>
        <taxon>Brucella</taxon>
    </lineage>
</organism>
<sequence length="359" mass="37996">MRVLGIETSCDETAAAIVERDDMGEGRILSNLVLSQIAEHEPYGGVVPEIAARAHVEALDRLVDRALNDAGLKLYEVDAVAATAGPGLIGGLIVGLMTAKALAMAAQKPFYAVNHLEGHALTARLTDGLPFPYLLLLVSGGHTQMVLVRGIGDYERLGTTIDDALGEAFDKTAKLLGLPYPGGPAVERMALQGDQKRFALPRPLKGEARLNFSFSGLKTAVRQTATELVPLTDQDVTDICASFQAAVADTLSDRVGRSLERFKTEFPDCATPSLVVAGGVAANKTLRAALENLCTRHGFAFIAPPLNLCTDNAAMIAWAGAERAATQAPDSLDIAPRSRWPLDEKSAPVFGTGRRGAKA</sequence>
<accession>B0CIE0</accession>
<comment type="function">
    <text evidence="1">Required for the formation of a threonylcarbamoyl group on adenosine at position 37 (t(6)A37) in tRNAs that read codons beginning with adenine. Is involved in the transfer of the threonylcarbamoyl moiety of threonylcarbamoyl-AMP (TC-AMP) to the N6 group of A37, together with TsaE and TsaB. TsaD likely plays a direct catalytic role in this reaction.</text>
</comment>
<comment type="catalytic activity">
    <reaction evidence="1">
        <text>L-threonylcarbamoyladenylate + adenosine(37) in tRNA = N(6)-L-threonylcarbamoyladenosine(37) in tRNA + AMP + H(+)</text>
        <dbReference type="Rhea" id="RHEA:37059"/>
        <dbReference type="Rhea" id="RHEA-COMP:10162"/>
        <dbReference type="Rhea" id="RHEA-COMP:10163"/>
        <dbReference type="ChEBI" id="CHEBI:15378"/>
        <dbReference type="ChEBI" id="CHEBI:73682"/>
        <dbReference type="ChEBI" id="CHEBI:74411"/>
        <dbReference type="ChEBI" id="CHEBI:74418"/>
        <dbReference type="ChEBI" id="CHEBI:456215"/>
        <dbReference type="EC" id="2.3.1.234"/>
    </reaction>
</comment>
<comment type="cofactor">
    <cofactor evidence="1">
        <name>Fe(2+)</name>
        <dbReference type="ChEBI" id="CHEBI:29033"/>
    </cofactor>
    <text evidence="1">Binds 1 Fe(2+) ion per subunit.</text>
</comment>
<comment type="subcellular location">
    <subcellularLocation>
        <location evidence="1">Cytoplasm</location>
    </subcellularLocation>
</comment>
<comment type="similarity">
    <text evidence="1">Belongs to the KAE1 / TsaD family.</text>
</comment>
<gene>
    <name evidence="1" type="primary">tsaD</name>
    <name type="synonym">gcp</name>
    <name type="ordered locus">BSUIS_A1728</name>
</gene>
<protein>
    <recommendedName>
        <fullName evidence="1">tRNA N6-adenosine threonylcarbamoyltransferase</fullName>
        <ecNumber evidence="1">2.3.1.234</ecNumber>
    </recommendedName>
    <alternativeName>
        <fullName evidence="1">N6-L-threonylcarbamoyladenine synthase</fullName>
        <shortName evidence="1">t(6)A synthase</shortName>
    </alternativeName>
    <alternativeName>
        <fullName evidence="1">t(6)A37 threonylcarbamoyladenosine biosynthesis protein TsaD</fullName>
    </alternativeName>
    <alternativeName>
        <fullName evidence="1">tRNA threonylcarbamoyladenosine biosynthesis protein TsaD</fullName>
    </alternativeName>
</protein>
<keyword id="KW-0012">Acyltransferase</keyword>
<keyword id="KW-0963">Cytoplasm</keyword>
<keyword id="KW-0408">Iron</keyword>
<keyword id="KW-0479">Metal-binding</keyword>
<keyword id="KW-0808">Transferase</keyword>
<keyword id="KW-0819">tRNA processing</keyword>
<proteinExistence type="inferred from homology"/>
<dbReference type="EC" id="2.3.1.234" evidence="1"/>
<dbReference type="EMBL" id="CP000911">
    <property type="protein sequence ID" value="ABY38746.1"/>
    <property type="molecule type" value="Genomic_DNA"/>
</dbReference>
<dbReference type="RefSeq" id="WP_006071619.1">
    <property type="nucleotide sequence ID" value="NC_010169.1"/>
</dbReference>
<dbReference type="SMR" id="B0CIE0"/>
<dbReference type="KEGG" id="bmt:BSUIS_A1728"/>
<dbReference type="HOGENOM" id="CLU_023208_0_2_5"/>
<dbReference type="Proteomes" id="UP000008545">
    <property type="component" value="Chromosome I"/>
</dbReference>
<dbReference type="GO" id="GO:0005737">
    <property type="term" value="C:cytoplasm"/>
    <property type="evidence" value="ECO:0007669"/>
    <property type="project" value="UniProtKB-SubCell"/>
</dbReference>
<dbReference type="GO" id="GO:0005506">
    <property type="term" value="F:iron ion binding"/>
    <property type="evidence" value="ECO:0007669"/>
    <property type="project" value="UniProtKB-UniRule"/>
</dbReference>
<dbReference type="GO" id="GO:0061711">
    <property type="term" value="F:N(6)-L-threonylcarbamoyladenine synthase activity"/>
    <property type="evidence" value="ECO:0007669"/>
    <property type="project" value="UniProtKB-EC"/>
</dbReference>
<dbReference type="GO" id="GO:0002949">
    <property type="term" value="P:tRNA threonylcarbamoyladenosine modification"/>
    <property type="evidence" value="ECO:0007669"/>
    <property type="project" value="UniProtKB-UniRule"/>
</dbReference>
<dbReference type="CDD" id="cd24133">
    <property type="entry name" value="ASKHA_NBD_TsaD_bac"/>
    <property type="match status" value="1"/>
</dbReference>
<dbReference type="FunFam" id="3.30.420.40:FF:000040">
    <property type="entry name" value="tRNA N6-adenosine threonylcarbamoyltransferase"/>
    <property type="match status" value="1"/>
</dbReference>
<dbReference type="Gene3D" id="3.30.420.40">
    <property type="match status" value="2"/>
</dbReference>
<dbReference type="HAMAP" id="MF_01445">
    <property type="entry name" value="TsaD"/>
    <property type="match status" value="1"/>
</dbReference>
<dbReference type="InterPro" id="IPR043129">
    <property type="entry name" value="ATPase_NBD"/>
</dbReference>
<dbReference type="InterPro" id="IPR000905">
    <property type="entry name" value="Gcp-like_dom"/>
</dbReference>
<dbReference type="InterPro" id="IPR017861">
    <property type="entry name" value="KAE1/TsaD"/>
</dbReference>
<dbReference type="InterPro" id="IPR022450">
    <property type="entry name" value="TsaD"/>
</dbReference>
<dbReference type="NCBIfam" id="TIGR00329">
    <property type="entry name" value="gcp_kae1"/>
    <property type="match status" value="1"/>
</dbReference>
<dbReference type="NCBIfam" id="TIGR03723">
    <property type="entry name" value="T6A_TsaD_YgjD"/>
    <property type="match status" value="1"/>
</dbReference>
<dbReference type="PANTHER" id="PTHR11735">
    <property type="entry name" value="TRNA N6-ADENOSINE THREONYLCARBAMOYLTRANSFERASE"/>
    <property type="match status" value="1"/>
</dbReference>
<dbReference type="PANTHER" id="PTHR11735:SF6">
    <property type="entry name" value="TRNA N6-ADENOSINE THREONYLCARBAMOYLTRANSFERASE, MITOCHONDRIAL"/>
    <property type="match status" value="1"/>
</dbReference>
<dbReference type="Pfam" id="PF00814">
    <property type="entry name" value="TsaD"/>
    <property type="match status" value="1"/>
</dbReference>
<dbReference type="PRINTS" id="PR00789">
    <property type="entry name" value="OSIALOPTASE"/>
</dbReference>
<dbReference type="SUPFAM" id="SSF53067">
    <property type="entry name" value="Actin-like ATPase domain"/>
    <property type="match status" value="2"/>
</dbReference>
<feature type="chain" id="PRO_1000087469" description="tRNA N6-adenosine threonylcarbamoyltransferase">
    <location>
        <begin position="1"/>
        <end position="359"/>
    </location>
</feature>
<feature type="region of interest" description="Disordered" evidence="2">
    <location>
        <begin position="328"/>
        <end position="359"/>
    </location>
</feature>
<feature type="binding site" evidence="1">
    <location>
        <position position="115"/>
    </location>
    <ligand>
        <name>Fe cation</name>
        <dbReference type="ChEBI" id="CHEBI:24875"/>
    </ligand>
</feature>
<feature type="binding site" evidence="1">
    <location>
        <position position="119"/>
    </location>
    <ligand>
        <name>Fe cation</name>
        <dbReference type="ChEBI" id="CHEBI:24875"/>
    </ligand>
</feature>
<feature type="binding site" evidence="1">
    <location>
        <begin position="137"/>
        <end position="141"/>
    </location>
    <ligand>
        <name>substrate</name>
    </ligand>
</feature>
<feature type="binding site" evidence="1">
    <location>
        <position position="170"/>
    </location>
    <ligand>
        <name>substrate</name>
    </ligand>
</feature>
<feature type="binding site" evidence="1">
    <location>
        <position position="183"/>
    </location>
    <ligand>
        <name>substrate</name>
    </ligand>
</feature>
<feature type="binding site" evidence="1">
    <location>
        <position position="283"/>
    </location>
    <ligand>
        <name>substrate</name>
    </ligand>
</feature>
<feature type="binding site" evidence="1">
    <location>
        <position position="311"/>
    </location>
    <ligand>
        <name>Fe cation</name>
        <dbReference type="ChEBI" id="CHEBI:24875"/>
    </ligand>
</feature>
<reference key="1">
    <citation type="submission" date="2007-12" db="EMBL/GenBank/DDBJ databases">
        <title>Brucella suis ATCC 23445 whole genome shotgun sequencing project.</title>
        <authorList>
            <person name="Setubal J.C."/>
            <person name="Bowns C."/>
            <person name="Boyle S."/>
            <person name="Crasta O.R."/>
            <person name="Czar M.J."/>
            <person name="Dharmanolla C."/>
            <person name="Gillespie J.J."/>
            <person name="Kenyon R.W."/>
            <person name="Lu J."/>
            <person name="Mane S."/>
            <person name="Mohapatra S."/>
            <person name="Nagrani S."/>
            <person name="Purkayastha A."/>
            <person name="Rajasimha H.K."/>
            <person name="Shallom J.M."/>
            <person name="Shallom S."/>
            <person name="Shukla M."/>
            <person name="Snyder E.E."/>
            <person name="Sobral B.W."/>
            <person name="Wattam A.R."/>
            <person name="Will R."/>
            <person name="Williams K."/>
            <person name="Yoo H."/>
            <person name="Bruce D."/>
            <person name="Detter C."/>
            <person name="Munk C."/>
            <person name="Brettin T.S."/>
        </authorList>
    </citation>
    <scope>NUCLEOTIDE SEQUENCE [LARGE SCALE GENOMIC DNA]</scope>
    <source>
        <strain>ATCC 23445 / NCTC 10510</strain>
    </source>
</reference>
<evidence type="ECO:0000255" key="1">
    <source>
        <dbReference type="HAMAP-Rule" id="MF_01445"/>
    </source>
</evidence>
<evidence type="ECO:0000256" key="2">
    <source>
        <dbReference type="SAM" id="MobiDB-lite"/>
    </source>
</evidence>
<name>TSAD_BRUSI</name>